<proteinExistence type="inferred from homology"/>
<accession>Q9HV50</accession>
<dbReference type="EC" id="5.4.2.10" evidence="1"/>
<dbReference type="EMBL" id="AE004091">
    <property type="protein sequence ID" value="AAG08135.1"/>
    <property type="molecule type" value="Genomic_DNA"/>
</dbReference>
<dbReference type="PIR" id="D83053">
    <property type="entry name" value="D83053"/>
</dbReference>
<dbReference type="RefSeq" id="NP_253437.1">
    <property type="nucleotide sequence ID" value="NC_002516.2"/>
</dbReference>
<dbReference type="RefSeq" id="WP_003095196.1">
    <property type="nucleotide sequence ID" value="NZ_QZGE01000018.1"/>
</dbReference>
<dbReference type="SMR" id="Q9HV50"/>
<dbReference type="FunCoup" id="Q9HV50">
    <property type="interactions" value="511"/>
</dbReference>
<dbReference type="STRING" id="208964.PA4749"/>
<dbReference type="PaxDb" id="208964-PA4749"/>
<dbReference type="DNASU" id="881713"/>
<dbReference type="GeneID" id="881713"/>
<dbReference type="KEGG" id="pae:PA4749"/>
<dbReference type="PATRIC" id="fig|208964.12.peg.4975"/>
<dbReference type="PseudoCAP" id="PA4749"/>
<dbReference type="HOGENOM" id="CLU_016950_7_0_6"/>
<dbReference type="InParanoid" id="Q9HV50"/>
<dbReference type="OrthoDB" id="9803322at2"/>
<dbReference type="PhylomeDB" id="Q9HV50"/>
<dbReference type="BioCyc" id="PAER208964:G1FZ6-4861-MONOMER"/>
<dbReference type="Proteomes" id="UP000002438">
    <property type="component" value="Chromosome"/>
</dbReference>
<dbReference type="GO" id="GO:0005829">
    <property type="term" value="C:cytosol"/>
    <property type="evidence" value="ECO:0000318"/>
    <property type="project" value="GO_Central"/>
</dbReference>
<dbReference type="GO" id="GO:0000287">
    <property type="term" value="F:magnesium ion binding"/>
    <property type="evidence" value="ECO:0007669"/>
    <property type="project" value="UniProtKB-UniRule"/>
</dbReference>
<dbReference type="GO" id="GO:0004614">
    <property type="term" value="F:phosphoglucomutase activity"/>
    <property type="evidence" value="ECO:0000314"/>
    <property type="project" value="PseudoCAP"/>
</dbReference>
<dbReference type="GO" id="GO:0008966">
    <property type="term" value="F:phosphoglucosamine mutase activity"/>
    <property type="evidence" value="ECO:0000314"/>
    <property type="project" value="PseudoCAP"/>
</dbReference>
<dbReference type="GO" id="GO:0004615">
    <property type="term" value="F:phosphomannomutase activity"/>
    <property type="evidence" value="ECO:0000314"/>
    <property type="project" value="PseudoCAP"/>
</dbReference>
<dbReference type="GO" id="GO:0005975">
    <property type="term" value="P:carbohydrate metabolic process"/>
    <property type="evidence" value="ECO:0007669"/>
    <property type="project" value="InterPro"/>
</dbReference>
<dbReference type="GO" id="GO:0009252">
    <property type="term" value="P:peptidoglycan biosynthetic process"/>
    <property type="evidence" value="ECO:0000314"/>
    <property type="project" value="PseudoCAP"/>
</dbReference>
<dbReference type="GO" id="GO:0006048">
    <property type="term" value="P:UDP-N-acetylglucosamine biosynthetic process"/>
    <property type="evidence" value="ECO:0000318"/>
    <property type="project" value="GO_Central"/>
</dbReference>
<dbReference type="CDD" id="cd05802">
    <property type="entry name" value="GlmM"/>
    <property type="match status" value="1"/>
</dbReference>
<dbReference type="FunFam" id="3.30.310.50:FF:000001">
    <property type="entry name" value="Phosphoglucosamine mutase"/>
    <property type="match status" value="1"/>
</dbReference>
<dbReference type="FunFam" id="3.40.120.10:FF:000001">
    <property type="entry name" value="Phosphoglucosamine mutase"/>
    <property type="match status" value="1"/>
</dbReference>
<dbReference type="FunFam" id="3.40.120.10:FF:000003">
    <property type="entry name" value="Phosphoglucosamine mutase"/>
    <property type="match status" value="1"/>
</dbReference>
<dbReference type="Gene3D" id="3.40.120.10">
    <property type="entry name" value="Alpha-D-Glucose-1,6-Bisphosphate, subunit A, domain 3"/>
    <property type="match status" value="3"/>
</dbReference>
<dbReference type="Gene3D" id="3.30.310.50">
    <property type="entry name" value="Alpha-D-phosphohexomutase, C-terminal domain"/>
    <property type="match status" value="1"/>
</dbReference>
<dbReference type="HAMAP" id="MF_01554_B">
    <property type="entry name" value="GlmM_B"/>
    <property type="match status" value="1"/>
</dbReference>
<dbReference type="InterPro" id="IPR005844">
    <property type="entry name" value="A-D-PHexomutase_a/b/a-I"/>
</dbReference>
<dbReference type="InterPro" id="IPR016055">
    <property type="entry name" value="A-D-PHexomutase_a/b/a-I/II/III"/>
</dbReference>
<dbReference type="InterPro" id="IPR005845">
    <property type="entry name" value="A-D-PHexomutase_a/b/a-II"/>
</dbReference>
<dbReference type="InterPro" id="IPR005846">
    <property type="entry name" value="A-D-PHexomutase_a/b/a-III"/>
</dbReference>
<dbReference type="InterPro" id="IPR005843">
    <property type="entry name" value="A-D-PHexomutase_C"/>
</dbReference>
<dbReference type="InterPro" id="IPR036900">
    <property type="entry name" value="A-D-PHexomutase_C_sf"/>
</dbReference>
<dbReference type="InterPro" id="IPR016066">
    <property type="entry name" value="A-D-PHexomutase_CS"/>
</dbReference>
<dbReference type="InterPro" id="IPR005841">
    <property type="entry name" value="Alpha-D-phosphohexomutase_SF"/>
</dbReference>
<dbReference type="InterPro" id="IPR006352">
    <property type="entry name" value="GlmM_bact"/>
</dbReference>
<dbReference type="InterPro" id="IPR050060">
    <property type="entry name" value="Phosphoglucosamine_mutase"/>
</dbReference>
<dbReference type="NCBIfam" id="TIGR01455">
    <property type="entry name" value="glmM"/>
    <property type="match status" value="1"/>
</dbReference>
<dbReference type="NCBIfam" id="NF008139">
    <property type="entry name" value="PRK10887.1"/>
    <property type="match status" value="1"/>
</dbReference>
<dbReference type="PANTHER" id="PTHR42946:SF1">
    <property type="entry name" value="PHOSPHOGLUCOMUTASE (ALPHA-D-GLUCOSE-1,6-BISPHOSPHATE-DEPENDENT)"/>
    <property type="match status" value="1"/>
</dbReference>
<dbReference type="PANTHER" id="PTHR42946">
    <property type="entry name" value="PHOSPHOHEXOSE MUTASE"/>
    <property type="match status" value="1"/>
</dbReference>
<dbReference type="Pfam" id="PF02878">
    <property type="entry name" value="PGM_PMM_I"/>
    <property type="match status" value="1"/>
</dbReference>
<dbReference type="Pfam" id="PF02879">
    <property type="entry name" value="PGM_PMM_II"/>
    <property type="match status" value="1"/>
</dbReference>
<dbReference type="Pfam" id="PF02880">
    <property type="entry name" value="PGM_PMM_III"/>
    <property type="match status" value="1"/>
</dbReference>
<dbReference type="Pfam" id="PF00408">
    <property type="entry name" value="PGM_PMM_IV"/>
    <property type="match status" value="1"/>
</dbReference>
<dbReference type="PRINTS" id="PR00509">
    <property type="entry name" value="PGMPMM"/>
</dbReference>
<dbReference type="SUPFAM" id="SSF55957">
    <property type="entry name" value="Phosphoglucomutase, C-terminal domain"/>
    <property type="match status" value="1"/>
</dbReference>
<dbReference type="SUPFAM" id="SSF53738">
    <property type="entry name" value="Phosphoglucomutase, first 3 domains"/>
    <property type="match status" value="3"/>
</dbReference>
<dbReference type="PROSITE" id="PS00710">
    <property type="entry name" value="PGM_PMM"/>
    <property type="match status" value="1"/>
</dbReference>
<feature type="chain" id="PRO_0000147938" description="Phosphoglucosamine mutase">
    <location>
        <begin position="1"/>
        <end position="445"/>
    </location>
</feature>
<feature type="active site" description="Phosphoserine intermediate" evidence="1">
    <location>
        <position position="101"/>
    </location>
</feature>
<feature type="binding site" description="via phosphate group" evidence="1">
    <location>
        <position position="101"/>
    </location>
    <ligand>
        <name>Mg(2+)</name>
        <dbReference type="ChEBI" id="CHEBI:18420"/>
    </ligand>
</feature>
<feature type="binding site" evidence="1">
    <location>
        <position position="240"/>
    </location>
    <ligand>
        <name>Mg(2+)</name>
        <dbReference type="ChEBI" id="CHEBI:18420"/>
    </ligand>
</feature>
<feature type="binding site" evidence="1">
    <location>
        <position position="242"/>
    </location>
    <ligand>
        <name>Mg(2+)</name>
        <dbReference type="ChEBI" id="CHEBI:18420"/>
    </ligand>
</feature>
<feature type="binding site" evidence="1">
    <location>
        <position position="244"/>
    </location>
    <ligand>
        <name>Mg(2+)</name>
        <dbReference type="ChEBI" id="CHEBI:18420"/>
    </ligand>
</feature>
<feature type="modified residue" description="Phosphoserine" evidence="1">
    <location>
        <position position="101"/>
    </location>
</feature>
<comment type="function">
    <text evidence="1">Catalyzes the conversion of glucosamine-6-phosphate to glucosamine-1-phosphate.</text>
</comment>
<comment type="catalytic activity">
    <reaction evidence="1">
        <text>alpha-D-glucosamine 1-phosphate = D-glucosamine 6-phosphate</text>
        <dbReference type="Rhea" id="RHEA:23424"/>
        <dbReference type="ChEBI" id="CHEBI:58516"/>
        <dbReference type="ChEBI" id="CHEBI:58725"/>
        <dbReference type="EC" id="5.4.2.10"/>
    </reaction>
</comment>
<comment type="cofactor">
    <cofactor evidence="1">
        <name>Mg(2+)</name>
        <dbReference type="ChEBI" id="CHEBI:18420"/>
    </cofactor>
    <text evidence="1">Binds 1 Mg(2+) ion per subunit.</text>
</comment>
<comment type="PTM">
    <text evidence="1">Activated by phosphorylation.</text>
</comment>
<comment type="similarity">
    <text evidence="1">Belongs to the phosphohexose mutase family.</text>
</comment>
<evidence type="ECO:0000255" key="1">
    <source>
        <dbReference type="HAMAP-Rule" id="MF_01554"/>
    </source>
</evidence>
<reference key="1">
    <citation type="journal article" date="2000" name="Nature">
        <title>Complete genome sequence of Pseudomonas aeruginosa PAO1, an opportunistic pathogen.</title>
        <authorList>
            <person name="Stover C.K."/>
            <person name="Pham X.-Q.T."/>
            <person name="Erwin A.L."/>
            <person name="Mizoguchi S.D."/>
            <person name="Warrener P."/>
            <person name="Hickey M.J."/>
            <person name="Brinkman F.S.L."/>
            <person name="Hufnagle W.O."/>
            <person name="Kowalik D.J."/>
            <person name="Lagrou M."/>
            <person name="Garber R.L."/>
            <person name="Goltry L."/>
            <person name="Tolentino E."/>
            <person name="Westbrock-Wadman S."/>
            <person name="Yuan Y."/>
            <person name="Brody L.L."/>
            <person name="Coulter S.N."/>
            <person name="Folger K.R."/>
            <person name="Kas A."/>
            <person name="Larbig K."/>
            <person name="Lim R.M."/>
            <person name="Smith K.A."/>
            <person name="Spencer D.H."/>
            <person name="Wong G.K.-S."/>
            <person name="Wu Z."/>
            <person name="Paulsen I.T."/>
            <person name="Reizer J."/>
            <person name="Saier M.H. Jr."/>
            <person name="Hancock R.E.W."/>
            <person name="Lory S."/>
            <person name="Olson M.V."/>
        </authorList>
    </citation>
    <scope>NUCLEOTIDE SEQUENCE [LARGE SCALE GENOMIC DNA]</scope>
    <source>
        <strain>ATCC 15692 / DSM 22644 / CIP 104116 / JCM 14847 / LMG 12228 / 1C / PRS 101 / PAO1</strain>
    </source>
</reference>
<sequence length="445" mass="47797">MSRKYFGTDGIRGRVGEFPITPDFVLKLGWAVGMAFRRQGNCRVLIGKDTRSSGYMFESAFEAGLSASGADTLLLGPMPTPGIAYLTRTFHAEAGVVISASHNPHDDNGIKFFSGQGTKLPDDVELMIEELLDAPMTVVESARLGKVSRINDAAGRYIEFCKSSVPTSTDFNGLKVVLDCANGATYKIAPSVFRELGAEVTVLAASPNGLNINDKCGSTHLDGLQAAVVEHHADLGIAFDGDGDRVMMVDHTGAVVDGDELLFLIARDLQESGRLQGGVVGTLMSNLGLELALQELHIPFVRAKVGDRYVMAELLARNWMLGGENSGHIVCCQNTTTGDAIIAALQVLMALKHRGQTLAEARQGIRKCPQVLINVRFKGENDPLEHPSVKEASVRVTEQMGGRGRVLLRKSGTEPLVRVMVEGDEEASVRAHAEQLAKIVSEVCA</sequence>
<name>GLMM_PSEAE</name>
<keyword id="KW-0413">Isomerase</keyword>
<keyword id="KW-0460">Magnesium</keyword>
<keyword id="KW-0479">Metal-binding</keyword>
<keyword id="KW-0597">Phosphoprotein</keyword>
<keyword id="KW-1185">Reference proteome</keyword>
<gene>
    <name evidence="1" type="primary">glmM</name>
    <name type="ordered locus">PA4749</name>
</gene>
<organism>
    <name type="scientific">Pseudomonas aeruginosa (strain ATCC 15692 / DSM 22644 / CIP 104116 / JCM 14847 / LMG 12228 / 1C / PRS 101 / PAO1)</name>
    <dbReference type="NCBI Taxonomy" id="208964"/>
    <lineage>
        <taxon>Bacteria</taxon>
        <taxon>Pseudomonadati</taxon>
        <taxon>Pseudomonadota</taxon>
        <taxon>Gammaproteobacteria</taxon>
        <taxon>Pseudomonadales</taxon>
        <taxon>Pseudomonadaceae</taxon>
        <taxon>Pseudomonas</taxon>
    </lineage>
</organism>
<protein>
    <recommendedName>
        <fullName evidence="1">Phosphoglucosamine mutase</fullName>
        <ecNumber evidence="1">5.4.2.10</ecNumber>
    </recommendedName>
</protein>